<accession>Q7WD30</accession>
<feature type="chain" id="PRO_0000176238" description="Elongation factor 4">
    <location>
        <begin position="1"/>
        <end position="597"/>
    </location>
</feature>
<feature type="domain" description="tr-type G">
    <location>
        <begin position="2"/>
        <end position="184"/>
    </location>
</feature>
<feature type="binding site" evidence="1">
    <location>
        <begin position="14"/>
        <end position="19"/>
    </location>
    <ligand>
        <name>GTP</name>
        <dbReference type="ChEBI" id="CHEBI:37565"/>
    </ligand>
</feature>
<feature type="binding site" evidence="1">
    <location>
        <begin position="131"/>
        <end position="134"/>
    </location>
    <ligand>
        <name>GTP</name>
        <dbReference type="ChEBI" id="CHEBI:37565"/>
    </ligand>
</feature>
<comment type="function">
    <text evidence="1">Required for accurate and efficient protein synthesis under certain stress conditions. May act as a fidelity factor of the translation reaction, by catalyzing a one-codon backward translocation of tRNAs on improperly translocated ribosomes. Back-translocation proceeds from a post-translocation (POST) complex to a pre-translocation (PRE) complex, thus giving elongation factor G a second chance to translocate the tRNAs correctly. Binds to ribosomes in a GTP-dependent manner.</text>
</comment>
<comment type="catalytic activity">
    <reaction evidence="1">
        <text>GTP + H2O = GDP + phosphate + H(+)</text>
        <dbReference type="Rhea" id="RHEA:19669"/>
        <dbReference type="ChEBI" id="CHEBI:15377"/>
        <dbReference type="ChEBI" id="CHEBI:15378"/>
        <dbReference type="ChEBI" id="CHEBI:37565"/>
        <dbReference type="ChEBI" id="CHEBI:43474"/>
        <dbReference type="ChEBI" id="CHEBI:58189"/>
        <dbReference type="EC" id="3.6.5.n1"/>
    </reaction>
</comment>
<comment type="subcellular location">
    <subcellularLocation>
        <location evidence="1">Cell inner membrane</location>
        <topology evidence="1">Peripheral membrane protein</topology>
        <orientation evidence="1">Cytoplasmic side</orientation>
    </subcellularLocation>
</comment>
<comment type="similarity">
    <text evidence="1">Belongs to the TRAFAC class translation factor GTPase superfamily. Classic translation factor GTPase family. LepA subfamily.</text>
</comment>
<protein>
    <recommendedName>
        <fullName evidence="1">Elongation factor 4</fullName>
        <shortName evidence="1">EF-4</shortName>
        <ecNumber evidence="1">3.6.5.n1</ecNumber>
    </recommendedName>
    <alternativeName>
        <fullName evidence="1">Ribosomal back-translocase LepA</fullName>
    </alternativeName>
</protein>
<evidence type="ECO:0000255" key="1">
    <source>
        <dbReference type="HAMAP-Rule" id="MF_00071"/>
    </source>
</evidence>
<dbReference type="EC" id="3.6.5.n1" evidence="1"/>
<dbReference type="EMBL" id="BX640448">
    <property type="protein sequence ID" value="CAE35722.1"/>
    <property type="molecule type" value="Genomic_DNA"/>
</dbReference>
<dbReference type="RefSeq" id="WP_003813789.1">
    <property type="nucleotide sequence ID" value="NC_002927.3"/>
</dbReference>
<dbReference type="SMR" id="Q7WD30"/>
<dbReference type="GeneID" id="93205079"/>
<dbReference type="KEGG" id="bbr:BB3748"/>
<dbReference type="eggNOG" id="COG0481">
    <property type="taxonomic scope" value="Bacteria"/>
</dbReference>
<dbReference type="HOGENOM" id="CLU_009995_3_3_4"/>
<dbReference type="Proteomes" id="UP000001027">
    <property type="component" value="Chromosome"/>
</dbReference>
<dbReference type="GO" id="GO:0005886">
    <property type="term" value="C:plasma membrane"/>
    <property type="evidence" value="ECO:0007669"/>
    <property type="project" value="UniProtKB-SubCell"/>
</dbReference>
<dbReference type="GO" id="GO:0005525">
    <property type="term" value="F:GTP binding"/>
    <property type="evidence" value="ECO:0007669"/>
    <property type="project" value="UniProtKB-UniRule"/>
</dbReference>
<dbReference type="GO" id="GO:0003924">
    <property type="term" value="F:GTPase activity"/>
    <property type="evidence" value="ECO:0007669"/>
    <property type="project" value="UniProtKB-UniRule"/>
</dbReference>
<dbReference type="GO" id="GO:0097216">
    <property type="term" value="F:guanosine tetraphosphate binding"/>
    <property type="evidence" value="ECO:0007669"/>
    <property type="project" value="UniProtKB-ARBA"/>
</dbReference>
<dbReference type="GO" id="GO:0043022">
    <property type="term" value="F:ribosome binding"/>
    <property type="evidence" value="ECO:0007669"/>
    <property type="project" value="UniProtKB-UniRule"/>
</dbReference>
<dbReference type="GO" id="GO:0003746">
    <property type="term" value="F:translation elongation factor activity"/>
    <property type="evidence" value="ECO:0007669"/>
    <property type="project" value="UniProtKB-UniRule"/>
</dbReference>
<dbReference type="GO" id="GO:0045727">
    <property type="term" value="P:positive regulation of translation"/>
    <property type="evidence" value="ECO:0007669"/>
    <property type="project" value="UniProtKB-UniRule"/>
</dbReference>
<dbReference type="CDD" id="cd03699">
    <property type="entry name" value="EF4_II"/>
    <property type="match status" value="1"/>
</dbReference>
<dbReference type="CDD" id="cd16260">
    <property type="entry name" value="EF4_III"/>
    <property type="match status" value="1"/>
</dbReference>
<dbReference type="CDD" id="cd01890">
    <property type="entry name" value="LepA"/>
    <property type="match status" value="1"/>
</dbReference>
<dbReference type="CDD" id="cd03709">
    <property type="entry name" value="lepA_C"/>
    <property type="match status" value="1"/>
</dbReference>
<dbReference type="FunFam" id="3.40.50.300:FF:000078">
    <property type="entry name" value="Elongation factor 4"/>
    <property type="match status" value="1"/>
</dbReference>
<dbReference type="FunFam" id="2.40.30.10:FF:000015">
    <property type="entry name" value="Translation factor GUF1, mitochondrial"/>
    <property type="match status" value="1"/>
</dbReference>
<dbReference type="FunFam" id="3.30.70.240:FF:000007">
    <property type="entry name" value="Translation factor GUF1, mitochondrial"/>
    <property type="match status" value="1"/>
</dbReference>
<dbReference type="FunFam" id="3.30.70.2570:FF:000001">
    <property type="entry name" value="Translation factor GUF1, mitochondrial"/>
    <property type="match status" value="1"/>
</dbReference>
<dbReference type="FunFam" id="3.30.70.870:FF:000004">
    <property type="entry name" value="Translation factor GUF1, mitochondrial"/>
    <property type="match status" value="1"/>
</dbReference>
<dbReference type="Gene3D" id="3.30.70.240">
    <property type="match status" value="1"/>
</dbReference>
<dbReference type="Gene3D" id="3.30.70.2570">
    <property type="entry name" value="Elongation factor 4, C-terminal domain"/>
    <property type="match status" value="1"/>
</dbReference>
<dbReference type="Gene3D" id="3.30.70.870">
    <property type="entry name" value="Elongation Factor G (Translational Gtpase), domain 3"/>
    <property type="match status" value="1"/>
</dbReference>
<dbReference type="Gene3D" id="3.40.50.300">
    <property type="entry name" value="P-loop containing nucleotide triphosphate hydrolases"/>
    <property type="match status" value="1"/>
</dbReference>
<dbReference type="Gene3D" id="2.40.30.10">
    <property type="entry name" value="Translation factors"/>
    <property type="match status" value="1"/>
</dbReference>
<dbReference type="HAMAP" id="MF_00071">
    <property type="entry name" value="LepA"/>
    <property type="match status" value="1"/>
</dbReference>
<dbReference type="InterPro" id="IPR006297">
    <property type="entry name" value="EF-4"/>
</dbReference>
<dbReference type="InterPro" id="IPR035647">
    <property type="entry name" value="EFG_III/V"/>
</dbReference>
<dbReference type="InterPro" id="IPR000640">
    <property type="entry name" value="EFG_V-like"/>
</dbReference>
<dbReference type="InterPro" id="IPR004161">
    <property type="entry name" value="EFTu-like_2"/>
</dbReference>
<dbReference type="InterPro" id="IPR031157">
    <property type="entry name" value="G_TR_CS"/>
</dbReference>
<dbReference type="InterPro" id="IPR038363">
    <property type="entry name" value="LepA_C_sf"/>
</dbReference>
<dbReference type="InterPro" id="IPR013842">
    <property type="entry name" value="LepA_CTD"/>
</dbReference>
<dbReference type="InterPro" id="IPR035654">
    <property type="entry name" value="LepA_IV"/>
</dbReference>
<dbReference type="InterPro" id="IPR027417">
    <property type="entry name" value="P-loop_NTPase"/>
</dbReference>
<dbReference type="InterPro" id="IPR005225">
    <property type="entry name" value="Small_GTP-bd"/>
</dbReference>
<dbReference type="InterPro" id="IPR000795">
    <property type="entry name" value="T_Tr_GTP-bd_dom"/>
</dbReference>
<dbReference type="InterPro" id="IPR009000">
    <property type="entry name" value="Transl_B-barrel_sf"/>
</dbReference>
<dbReference type="NCBIfam" id="TIGR01393">
    <property type="entry name" value="lepA"/>
    <property type="match status" value="1"/>
</dbReference>
<dbReference type="NCBIfam" id="TIGR00231">
    <property type="entry name" value="small_GTP"/>
    <property type="match status" value="1"/>
</dbReference>
<dbReference type="PANTHER" id="PTHR43512:SF4">
    <property type="entry name" value="TRANSLATION FACTOR GUF1 HOMOLOG, CHLOROPLASTIC"/>
    <property type="match status" value="1"/>
</dbReference>
<dbReference type="PANTHER" id="PTHR43512">
    <property type="entry name" value="TRANSLATION FACTOR GUF1-RELATED"/>
    <property type="match status" value="1"/>
</dbReference>
<dbReference type="Pfam" id="PF00679">
    <property type="entry name" value="EFG_C"/>
    <property type="match status" value="1"/>
</dbReference>
<dbReference type="Pfam" id="PF00009">
    <property type="entry name" value="GTP_EFTU"/>
    <property type="match status" value="1"/>
</dbReference>
<dbReference type="Pfam" id="PF03144">
    <property type="entry name" value="GTP_EFTU_D2"/>
    <property type="match status" value="1"/>
</dbReference>
<dbReference type="Pfam" id="PF06421">
    <property type="entry name" value="LepA_C"/>
    <property type="match status" value="1"/>
</dbReference>
<dbReference type="PRINTS" id="PR00315">
    <property type="entry name" value="ELONGATNFCT"/>
</dbReference>
<dbReference type="SMART" id="SM00838">
    <property type="entry name" value="EFG_C"/>
    <property type="match status" value="1"/>
</dbReference>
<dbReference type="SUPFAM" id="SSF54980">
    <property type="entry name" value="EF-G C-terminal domain-like"/>
    <property type="match status" value="2"/>
</dbReference>
<dbReference type="SUPFAM" id="SSF52540">
    <property type="entry name" value="P-loop containing nucleoside triphosphate hydrolases"/>
    <property type="match status" value="1"/>
</dbReference>
<dbReference type="SUPFAM" id="SSF50447">
    <property type="entry name" value="Translation proteins"/>
    <property type="match status" value="1"/>
</dbReference>
<dbReference type="PROSITE" id="PS00301">
    <property type="entry name" value="G_TR_1"/>
    <property type="match status" value="1"/>
</dbReference>
<dbReference type="PROSITE" id="PS51722">
    <property type="entry name" value="G_TR_2"/>
    <property type="match status" value="1"/>
</dbReference>
<proteinExistence type="inferred from homology"/>
<organism>
    <name type="scientific">Bordetella bronchiseptica (strain ATCC BAA-588 / NCTC 13252 / RB50)</name>
    <name type="common">Alcaligenes bronchisepticus</name>
    <dbReference type="NCBI Taxonomy" id="257310"/>
    <lineage>
        <taxon>Bacteria</taxon>
        <taxon>Pseudomonadati</taxon>
        <taxon>Pseudomonadota</taxon>
        <taxon>Betaproteobacteria</taxon>
        <taxon>Burkholderiales</taxon>
        <taxon>Alcaligenaceae</taxon>
        <taxon>Bordetella</taxon>
    </lineage>
</organism>
<keyword id="KW-0997">Cell inner membrane</keyword>
<keyword id="KW-1003">Cell membrane</keyword>
<keyword id="KW-0342">GTP-binding</keyword>
<keyword id="KW-0378">Hydrolase</keyword>
<keyword id="KW-0472">Membrane</keyword>
<keyword id="KW-0547">Nucleotide-binding</keyword>
<keyword id="KW-0648">Protein biosynthesis</keyword>
<sequence>MQHIRNFSIIAHIDHGKSTLADRLIHRCGGLAEREMSAQVLDSMDIERERGITIKAQTASLQYKSQDGTVYNLNLIDTPGHVDFSYEVSRSLSACEGALLVVDASQGVEAQTVANCYTAIELGVEVLPVLNKMDLPQADPEAARQEVEDVIGIDASEAVLASAKTGMGIDEILESIVARVPPPKGDPSAPLQALIIDSWFDNYVGVVMLVRIVNGVLKPKDKILLMASHATHLCEQIGVFTPKSQPRPELSAGEVGFVIAGIKELEHAKVGDTITLAGKPAAEPLPGFKEVKPQVFAGLYPVESSEYDQLRDSLEKLKLNDAALMFEPEVSQALGFGFRCGFLGLLHMEIVQERLEREFDMDIITTAPSVVYEVEQRDGTVVTIESPSRMPEIAKIADIREPIVKVTLFMPQEYVGPVMTLCNNKRGVQLNMSYHGRQVHLTYEIPLAEIVLDFFDKLKSVSRGYASMDYEFVEYRSADVVKVDLLINGDRVDALAMIAHRNNARYRAREVVSRMRGLIPRQMFDVAIQAAIGAEVIARENVKALRKNVLAKCYGGDISRKKKLLEKQKAGKKRMKQVGSVEIPQEAFLAILQVEDK</sequence>
<gene>
    <name evidence="1" type="primary">lepA</name>
    <name type="ordered locus">BB3748</name>
</gene>
<name>LEPA_BORBR</name>
<reference key="1">
    <citation type="journal article" date="2003" name="Nat. Genet.">
        <title>Comparative analysis of the genome sequences of Bordetella pertussis, Bordetella parapertussis and Bordetella bronchiseptica.</title>
        <authorList>
            <person name="Parkhill J."/>
            <person name="Sebaihia M."/>
            <person name="Preston A."/>
            <person name="Murphy L.D."/>
            <person name="Thomson N.R."/>
            <person name="Harris D.E."/>
            <person name="Holden M.T.G."/>
            <person name="Churcher C.M."/>
            <person name="Bentley S.D."/>
            <person name="Mungall K.L."/>
            <person name="Cerdeno-Tarraga A.-M."/>
            <person name="Temple L."/>
            <person name="James K.D."/>
            <person name="Harris B."/>
            <person name="Quail M.A."/>
            <person name="Achtman M."/>
            <person name="Atkin R."/>
            <person name="Baker S."/>
            <person name="Basham D."/>
            <person name="Bason N."/>
            <person name="Cherevach I."/>
            <person name="Chillingworth T."/>
            <person name="Collins M."/>
            <person name="Cronin A."/>
            <person name="Davis P."/>
            <person name="Doggett J."/>
            <person name="Feltwell T."/>
            <person name="Goble A."/>
            <person name="Hamlin N."/>
            <person name="Hauser H."/>
            <person name="Holroyd S."/>
            <person name="Jagels K."/>
            <person name="Leather S."/>
            <person name="Moule S."/>
            <person name="Norberczak H."/>
            <person name="O'Neil S."/>
            <person name="Ormond D."/>
            <person name="Price C."/>
            <person name="Rabbinowitsch E."/>
            <person name="Rutter S."/>
            <person name="Sanders M."/>
            <person name="Saunders D."/>
            <person name="Seeger K."/>
            <person name="Sharp S."/>
            <person name="Simmonds M."/>
            <person name="Skelton J."/>
            <person name="Squares R."/>
            <person name="Squares S."/>
            <person name="Stevens K."/>
            <person name="Unwin L."/>
            <person name="Whitehead S."/>
            <person name="Barrell B.G."/>
            <person name="Maskell D.J."/>
        </authorList>
    </citation>
    <scope>NUCLEOTIDE SEQUENCE [LARGE SCALE GENOMIC DNA]</scope>
    <source>
        <strain>ATCC BAA-588 / NCTC 13252 / RB50</strain>
    </source>
</reference>